<evidence type="ECO:0000250" key="1"/>
<evidence type="ECO:0000255" key="2"/>
<evidence type="ECO:0000305" key="3"/>
<proteinExistence type="inferred from homology"/>
<comment type="function">
    <text evidence="1">Core subunit of the mitochondrial membrane respiratory chain NADH dehydrogenase (Complex I) that is believed to belong to the minimal assembly required for catalysis. Complex I functions in the transfer of electrons from NADH to the respiratory chain. The immediate electron acceptor for the enzyme is believed to be ubiquinone (By similarity).</text>
</comment>
<comment type="catalytic activity">
    <reaction>
        <text>a ubiquinone + NADH + 5 H(+)(in) = a ubiquinol + NAD(+) + 4 H(+)(out)</text>
        <dbReference type="Rhea" id="RHEA:29091"/>
        <dbReference type="Rhea" id="RHEA-COMP:9565"/>
        <dbReference type="Rhea" id="RHEA-COMP:9566"/>
        <dbReference type="ChEBI" id="CHEBI:15378"/>
        <dbReference type="ChEBI" id="CHEBI:16389"/>
        <dbReference type="ChEBI" id="CHEBI:17976"/>
        <dbReference type="ChEBI" id="CHEBI:57540"/>
        <dbReference type="ChEBI" id="CHEBI:57945"/>
        <dbReference type="EC" id="7.1.1.2"/>
    </reaction>
</comment>
<comment type="subcellular location">
    <subcellularLocation>
        <location evidence="1">Mitochondrion inner membrane</location>
        <topology evidence="1">Multi-pass membrane protein</topology>
    </subcellularLocation>
</comment>
<comment type="similarity">
    <text evidence="3">Belongs to the complex I subunit 1 family.</text>
</comment>
<reference key="1">
    <citation type="journal article" date="1987" name="J. Biol. Chem.">
        <title>Comparison of the maxicircle (mitochondrial) genomes of Leishmania tarentolae and Trypanosoma brucei at the level of nucleotide sequence.</title>
        <authorList>
            <person name="Simpson L."/>
            <person name="Neckelmann N."/>
            <person name="de la Cruz V.F."/>
            <person name="Simpson A.M."/>
            <person name="Feagin J.E."/>
            <person name="Jasmer D.P."/>
            <person name="Stuart K."/>
        </authorList>
    </citation>
    <scope>NUCLEOTIDE SEQUENCE</scope>
</reference>
<geneLocation type="mitochondrion"/>
<sequence>MLNIDIIIIIIIDILVVLILTGFVSLCERRILALVQIRIGPALCFFGILTPITDGIKLFIKFIIFVISFDIIYLIGAMIITACCIFLGWFYFPIGFILLLDTGFTLTVMLCVHVFCSMFSTFFVGCFLFSSCFVYLSAMRTMFFSIISESGIFLLYTTIYSLDYFSFFGIKDVCVGQIYITNFYIAGVLFISVFWVSMLLDGLKLPFDYMECESELVAGLITELSGFFFVLYSVLEINHILLTTLLFASLCFGGLFICFKAILILIFGFFYPRVIGYRLKITTAQAFILIFLFYMCVLMFIWLFTTKIIAMLF</sequence>
<dbReference type="EC" id="7.1.1.2"/>
<dbReference type="PIR" id="D26696">
    <property type="entry name" value="D26696"/>
</dbReference>
<dbReference type="SMR" id="P15576"/>
<dbReference type="GO" id="GO:0005743">
    <property type="term" value="C:mitochondrial inner membrane"/>
    <property type="evidence" value="ECO:0007669"/>
    <property type="project" value="UniProtKB-SubCell"/>
</dbReference>
<dbReference type="GO" id="GO:0008137">
    <property type="term" value="F:NADH dehydrogenase (ubiquinone) activity"/>
    <property type="evidence" value="ECO:0007669"/>
    <property type="project" value="UniProtKB-EC"/>
</dbReference>
<dbReference type="GO" id="GO:0009060">
    <property type="term" value="P:aerobic respiration"/>
    <property type="evidence" value="ECO:0007669"/>
    <property type="project" value="TreeGrafter"/>
</dbReference>
<dbReference type="InterPro" id="IPR001694">
    <property type="entry name" value="NADH_UbQ_OxRdtase_su1/FPO"/>
</dbReference>
<dbReference type="InterPro" id="IPR018086">
    <property type="entry name" value="NADH_UbQ_OxRdtase_su1_CS"/>
</dbReference>
<dbReference type="PANTHER" id="PTHR11432">
    <property type="entry name" value="NADH DEHYDROGENASE SUBUNIT 1"/>
    <property type="match status" value="1"/>
</dbReference>
<dbReference type="PANTHER" id="PTHR11432:SF3">
    <property type="entry name" value="NADH-UBIQUINONE OXIDOREDUCTASE CHAIN 1"/>
    <property type="match status" value="1"/>
</dbReference>
<dbReference type="Pfam" id="PF00146">
    <property type="entry name" value="NADHdh"/>
    <property type="match status" value="1"/>
</dbReference>
<dbReference type="PROSITE" id="PS00668">
    <property type="entry name" value="COMPLEX1_ND1_2"/>
    <property type="match status" value="1"/>
</dbReference>
<protein>
    <recommendedName>
        <fullName>NADH-ubiquinone oxidoreductase chain 1</fullName>
        <ecNumber>7.1.1.2</ecNumber>
    </recommendedName>
    <alternativeName>
        <fullName>NADH dehydrogenase subunit 1</fullName>
    </alternativeName>
</protein>
<name>NU1M_LEITA</name>
<keyword id="KW-0249">Electron transport</keyword>
<keyword id="KW-0472">Membrane</keyword>
<keyword id="KW-0496">Mitochondrion</keyword>
<keyword id="KW-0999">Mitochondrion inner membrane</keyword>
<keyword id="KW-0520">NAD</keyword>
<keyword id="KW-0679">Respiratory chain</keyword>
<keyword id="KW-1278">Translocase</keyword>
<keyword id="KW-0812">Transmembrane</keyword>
<keyword id="KW-1133">Transmembrane helix</keyword>
<keyword id="KW-0813">Transport</keyword>
<keyword id="KW-0830">Ubiquinone</keyword>
<organism>
    <name type="scientific">Leishmania tarentolae</name>
    <name type="common">Sauroleishmania tarentolae</name>
    <dbReference type="NCBI Taxonomy" id="5689"/>
    <lineage>
        <taxon>Eukaryota</taxon>
        <taxon>Discoba</taxon>
        <taxon>Euglenozoa</taxon>
        <taxon>Kinetoplastea</taxon>
        <taxon>Metakinetoplastina</taxon>
        <taxon>Trypanosomatida</taxon>
        <taxon>Trypanosomatidae</taxon>
        <taxon>Leishmaniinae</taxon>
        <taxon>Leishmania</taxon>
        <taxon>lizard Leishmania</taxon>
    </lineage>
</organism>
<gene>
    <name type="primary">ND1</name>
</gene>
<feature type="chain" id="PRO_0000117418" description="NADH-ubiquinone oxidoreductase chain 1">
    <location>
        <begin position="1"/>
        <end position="313"/>
    </location>
</feature>
<feature type="transmembrane region" description="Helical" evidence="2">
    <location>
        <begin position="6"/>
        <end position="26"/>
    </location>
</feature>
<feature type="transmembrane region" description="Helical" evidence="2">
    <location>
        <begin position="31"/>
        <end position="51"/>
    </location>
</feature>
<feature type="transmembrane region" description="Helical" evidence="2">
    <location>
        <begin position="62"/>
        <end position="82"/>
    </location>
</feature>
<feature type="transmembrane region" description="Helical" evidence="2">
    <location>
        <begin position="84"/>
        <end position="104"/>
    </location>
</feature>
<feature type="transmembrane region" description="Helical" evidence="2">
    <location>
        <begin position="109"/>
        <end position="129"/>
    </location>
</feature>
<feature type="transmembrane region" description="Helical" evidence="2">
    <location>
        <begin position="142"/>
        <end position="162"/>
    </location>
</feature>
<feature type="transmembrane region" description="Helical" evidence="2">
    <location>
        <begin position="183"/>
        <end position="203"/>
    </location>
</feature>
<feature type="transmembrane region" description="Helical" evidence="2">
    <location>
        <begin position="216"/>
        <end position="235"/>
    </location>
</feature>
<feature type="transmembrane region" description="Helical" evidence="2">
    <location>
        <begin position="250"/>
        <end position="270"/>
    </location>
</feature>
<feature type="transmembrane region" description="Helical" evidence="2">
    <location>
        <begin position="286"/>
        <end position="306"/>
    </location>
</feature>
<accession>P15576</accession>